<accession>Q8DRQ4</accession>
<proteinExistence type="inferred from homology"/>
<organism>
    <name type="scientific">Streptococcus pneumoniae (strain ATCC BAA-255 / R6)</name>
    <dbReference type="NCBI Taxonomy" id="171101"/>
    <lineage>
        <taxon>Bacteria</taxon>
        <taxon>Bacillati</taxon>
        <taxon>Bacillota</taxon>
        <taxon>Bacilli</taxon>
        <taxon>Lactobacillales</taxon>
        <taxon>Streptococcaceae</taxon>
        <taxon>Streptococcus</taxon>
    </lineage>
</organism>
<gene>
    <name evidence="1" type="primary">dnaA</name>
    <name type="ordered locus">spr0001</name>
</gene>
<name>DNAA_STRR6</name>
<protein>
    <recommendedName>
        <fullName evidence="1">Chromosomal replication initiator protein DnaA</fullName>
    </recommendedName>
</protein>
<feature type="chain" id="PRO_0000114274" description="Chromosomal replication initiator protein DnaA">
    <location>
        <begin position="1"/>
        <end position="453"/>
    </location>
</feature>
<feature type="region of interest" description="Domain I, interacts with DnaA modulators" evidence="1">
    <location>
        <begin position="1"/>
        <end position="74"/>
    </location>
</feature>
<feature type="region of interest" description="Domain II" evidence="1">
    <location>
        <begin position="74"/>
        <end position="113"/>
    </location>
</feature>
<feature type="region of interest" description="Domain III, AAA+ region" evidence="1">
    <location>
        <begin position="114"/>
        <end position="331"/>
    </location>
</feature>
<feature type="region of interest" description="Domain IV, binds dsDNA" evidence="1">
    <location>
        <begin position="332"/>
        <end position="453"/>
    </location>
</feature>
<feature type="binding site" evidence="1">
    <location>
        <position position="158"/>
    </location>
    <ligand>
        <name>ATP</name>
        <dbReference type="ChEBI" id="CHEBI:30616"/>
    </ligand>
</feature>
<feature type="binding site" evidence="1">
    <location>
        <position position="160"/>
    </location>
    <ligand>
        <name>ATP</name>
        <dbReference type="ChEBI" id="CHEBI:30616"/>
    </ligand>
</feature>
<feature type="binding site" evidence="1">
    <location>
        <position position="161"/>
    </location>
    <ligand>
        <name>ATP</name>
        <dbReference type="ChEBI" id="CHEBI:30616"/>
    </ligand>
</feature>
<feature type="binding site" evidence="1">
    <location>
        <position position="162"/>
    </location>
    <ligand>
        <name>ATP</name>
        <dbReference type="ChEBI" id="CHEBI:30616"/>
    </ligand>
</feature>
<evidence type="ECO:0000255" key="1">
    <source>
        <dbReference type="HAMAP-Rule" id="MF_00377"/>
    </source>
</evidence>
<keyword id="KW-0067">ATP-binding</keyword>
<keyword id="KW-0963">Cytoplasm</keyword>
<keyword id="KW-0235">DNA replication</keyword>
<keyword id="KW-0238">DNA-binding</keyword>
<keyword id="KW-0446">Lipid-binding</keyword>
<keyword id="KW-0547">Nucleotide-binding</keyword>
<keyword id="KW-1185">Reference proteome</keyword>
<dbReference type="EMBL" id="AE007317">
    <property type="protein sequence ID" value="AAK98805.1"/>
    <property type="molecule type" value="Genomic_DNA"/>
</dbReference>
<dbReference type="PIR" id="A97872">
    <property type="entry name" value="A97872"/>
</dbReference>
<dbReference type="RefSeq" id="NP_357595.1">
    <property type="nucleotide sequence ID" value="NC_003098.1"/>
</dbReference>
<dbReference type="RefSeq" id="WP_000660615.1">
    <property type="nucleotide sequence ID" value="NC_003098.1"/>
</dbReference>
<dbReference type="SMR" id="Q8DRQ4"/>
<dbReference type="STRING" id="171101.spr0001"/>
<dbReference type="GeneID" id="45652535"/>
<dbReference type="KEGG" id="spr:spr0001"/>
<dbReference type="PATRIC" id="fig|171101.6.peg.1"/>
<dbReference type="eggNOG" id="COG0593">
    <property type="taxonomic scope" value="Bacteria"/>
</dbReference>
<dbReference type="HOGENOM" id="CLU_026910_3_1_9"/>
<dbReference type="Proteomes" id="UP000000586">
    <property type="component" value="Chromosome"/>
</dbReference>
<dbReference type="GO" id="GO:0005737">
    <property type="term" value="C:cytoplasm"/>
    <property type="evidence" value="ECO:0007669"/>
    <property type="project" value="UniProtKB-SubCell"/>
</dbReference>
<dbReference type="GO" id="GO:0005886">
    <property type="term" value="C:plasma membrane"/>
    <property type="evidence" value="ECO:0000318"/>
    <property type="project" value="GO_Central"/>
</dbReference>
<dbReference type="GO" id="GO:0005524">
    <property type="term" value="F:ATP binding"/>
    <property type="evidence" value="ECO:0007669"/>
    <property type="project" value="UniProtKB-UniRule"/>
</dbReference>
<dbReference type="GO" id="GO:0016887">
    <property type="term" value="F:ATP hydrolysis activity"/>
    <property type="evidence" value="ECO:0007669"/>
    <property type="project" value="InterPro"/>
</dbReference>
<dbReference type="GO" id="GO:0003688">
    <property type="term" value="F:DNA replication origin binding"/>
    <property type="evidence" value="ECO:0000318"/>
    <property type="project" value="GO_Central"/>
</dbReference>
<dbReference type="GO" id="GO:0008289">
    <property type="term" value="F:lipid binding"/>
    <property type="evidence" value="ECO:0007669"/>
    <property type="project" value="UniProtKB-KW"/>
</dbReference>
<dbReference type="GO" id="GO:0006260">
    <property type="term" value="P:DNA replication"/>
    <property type="evidence" value="ECO:0000318"/>
    <property type="project" value="GO_Central"/>
</dbReference>
<dbReference type="GO" id="GO:0006270">
    <property type="term" value="P:DNA replication initiation"/>
    <property type="evidence" value="ECO:0000318"/>
    <property type="project" value="GO_Central"/>
</dbReference>
<dbReference type="GO" id="GO:0006275">
    <property type="term" value="P:regulation of DNA replication"/>
    <property type="evidence" value="ECO:0007669"/>
    <property type="project" value="UniProtKB-UniRule"/>
</dbReference>
<dbReference type="CDD" id="cd00009">
    <property type="entry name" value="AAA"/>
    <property type="match status" value="1"/>
</dbReference>
<dbReference type="CDD" id="cd06571">
    <property type="entry name" value="Bac_DnaA_C"/>
    <property type="match status" value="1"/>
</dbReference>
<dbReference type="FunFam" id="1.10.1750.10:FF:000002">
    <property type="entry name" value="Chromosomal replication initiator protein DnaA"/>
    <property type="match status" value="1"/>
</dbReference>
<dbReference type="FunFam" id="1.10.8.60:FF:000129">
    <property type="entry name" value="Chromosomal replication initiator protein DnaA"/>
    <property type="match status" value="1"/>
</dbReference>
<dbReference type="FunFam" id="3.40.50.300:FF:000668">
    <property type="entry name" value="Chromosomal replication initiator protein DnaA"/>
    <property type="match status" value="1"/>
</dbReference>
<dbReference type="Gene3D" id="1.10.1750.10">
    <property type="match status" value="1"/>
</dbReference>
<dbReference type="Gene3D" id="1.10.8.60">
    <property type="match status" value="1"/>
</dbReference>
<dbReference type="Gene3D" id="3.40.50.300">
    <property type="entry name" value="P-loop containing nucleotide triphosphate hydrolases"/>
    <property type="match status" value="1"/>
</dbReference>
<dbReference type="HAMAP" id="MF_00377">
    <property type="entry name" value="DnaA_bact"/>
    <property type="match status" value="1"/>
</dbReference>
<dbReference type="InterPro" id="IPR003593">
    <property type="entry name" value="AAA+_ATPase"/>
</dbReference>
<dbReference type="InterPro" id="IPR001957">
    <property type="entry name" value="Chromosome_initiator_DnaA"/>
</dbReference>
<dbReference type="InterPro" id="IPR020591">
    <property type="entry name" value="Chromosome_initiator_DnaA-like"/>
</dbReference>
<dbReference type="InterPro" id="IPR018312">
    <property type="entry name" value="Chromosome_initiator_DnaA_CS"/>
</dbReference>
<dbReference type="InterPro" id="IPR013159">
    <property type="entry name" value="DnaA_C"/>
</dbReference>
<dbReference type="InterPro" id="IPR013317">
    <property type="entry name" value="DnaA_dom"/>
</dbReference>
<dbReference type="InterPro" id="IPR027417">
    <property type="entry name" value="P-loop_NTPase"/>
</dbReference>
<dbReference type="InterPro" id="IPR010921">
    <property type="entry name" value="Trp_repressor/repl_initiator"/>
</dbReference>
<dbReference type="NCBIfam" id="TIGR00362">
    <property type="entry name" value="DnaA"/>
    <property type="match status" value="1"/>
</dbReference>
<dbReference type="PANTHER" id="PTHR30050">
    <property type="entry name" value="CHROMOSOMAL REPLICATION INITIATOR PROTEIN DNAA"/>
    <property type="match status" value="1"/>
</dbReference>
<dbReference type="PANTHER" id="PTHR30050:SF2">
    <property type="entry name" value="CHROMOSOMAL REPLICATION INITIATOR PROTEIN DNAA"/>
    <property type="match status" value="1"/>
</dbReference>
<dbReference type="Pfam" id="PF00308">
    <property type="entry name" value="Bac_DnaA"/>
    <property type="match status" value="1"/>
</dbReference>
<dbReference type="Pfam" id="PF08299">
    <property type="entry name" value="Bac_DnaA_C"/>
    <property type="match status" value="1"/>
</dbReference>
<dbReference type="PRINTS" id="PR00051">
    <property type="entry name" value="DNAA"/>
</dbReference>
<dbReference type="SMART" id="SM00382">
    <property type="entry name" value="AAA"/>
    <property type="match status" value="1"/>
</dbReference>
<dbReference type="SMART" id="SM00760">
    <property type="entry name" value="Bac_DnaA_C"/>
    <property type="match status" value="1"/>
</dbReference>
<dbReference type="SUPFAM" id="SSF52540">
    <property type="entry name" value="P-loop containing nucleoside triphosphate hydrolases"/>
    <property type="match status" value="1"/>
</dbReference>
<dbReference type="SUPFAM" id="SSF48295">
    <property type="entry name" value="TrpR-like"/>
    <property type="match status" value="1"/>
</dbReference>
<dbReference type="PROSITE" id="PS01008">
    <property type="entry name" value="DNAA"/>
    <property type="match status" value="1"/>
</dbReference>
<sequence>MKEKQFWNRILEFAQERLTRSMYDFYAIQAELIKVEENVATIFLPRSEMEMVWEKQLKDIIVVAGFEIYDAEITPHYIFTKPQDTTSSQVEEATNLTLYDYSPKLVSIPYSDTGLKEKYTFDNFIQGDGNVWAVSAALAVSEDLALTYNPLFIYGGPGLGKTHLLNAIGNEILKNIPNARVKYIPAESFINDFLDHLRLGEMEKFKKTYRSLDLLLIDDIQSLSGKKVATQEEFFNTFNALHDKQKQIVLTSDRSPKHLEGLEERLVTRFSWGLTQTITPPDFETRIAILQSKTEHLGYNFQSDTLEYLAGQFDSNVRDLEGAINDITLIARVKKIKDITIDIAAEAIRARKQDVSQMLVIPIDKIQTEVGNFYGVSIKEMKGSRRLQNIVLARQVAMYLSRELTDNSLPKIGKEFGGKDHTTVIHAHAKIKSLIDQDDNLRLEIESIKKKIK</sequence>
<reference key="1">
    <citation type="journal article" date="2001" name="J. Bacteriol.">
        <title>Genome of the bacterium Streptococcus pneumoniae strain R6.</title>
        <authorList>
            <person name="Hoskins J."/>
            <person name="Alborn W.E. Jr."/>
            <person name="Arnold J."/>
            <person name="Blaszczak L.C."/>
            <person name="Burgett S."/>
            <person name="DeHoff B.S."/>
            <person name="Estrem S.T."/>
            <person name="Fritz L."/>
            <person name="Fu D.-J."/>
            <person name="Fuller W."/>
            <person name="Geringer C."/>
            <person name="Gilmour R."/>
            <person name="Glass J.S."/>
            <person name="Khoja H."/>
            <person name="Kraft A.R."/>
            <person name="Lagace R.E."/>
            <person name="LeBlanc D.J."/>
            <person name="Lee L.N."/>
            <person name="Lefkowitz E.J."/>
            <person name="Lu J."/>
            <person name="Matsushima P."/>
            <person name="McAhren S.M."/>
            <person name="McHenney M."/>
            <person name="McLeaster K."/>
            <person name="Mundy C.W."/>
            <person name="Nicas T.I."/>
            <person name="Norris F.H."/>
            <person name="O'Gara M."/>
            <person name="Peery R.B."/>
            <person name="Robertson G.T."/>
            <person name="Rockey P."/>
            <person name="Sun P.-M."/>
            <person name="Winkler M.E."/>
            <person name="Yang Y."/>
            <person name="Young-Bellido M."/>
            <person name="Zhao G."/>
            <person name="Zook C.A."/>
            <person name="Baltz R.H."/>
            <person name="Jaskunas S.R."/>
            <person name="Rosteck P.R. Jr."/>
            <person name="Skatrud P.L."/>
            <person name="Glass J.I."/>
        </authorList>
    </citation>
    <scope>NUCLEOTIDE SEQUENCE [LARGE SCALE GENOMIC DNA]</scope>
    <source>
        <strain>ATCC BAA-255 / R6</strain>
    </source>
</reference>
<comment type="function">
    <text evidence="1">Plays an essential role in the initiation and regulation of chromosomal replication. ATP-DnaA binds to the origin of replication (oriC) to initiate formation of the DNA replication initiation complex once per cell cycle. Binds the DnaA box (a 9 base pair repeat at the origin) and separates the double-stranded (ds)DNA. Forms a right-handed helical filament on oriC DNA; dsDNA binds to the exterior of the filament while single-stranded (ss)DNA is stabiized in the filament's interior. The ATP-DnaA-oriC complex binds and stabilizes one strand of the AT-rich DNA unwinding element (DUE), permitting loading of DNA polymerase. After initiation quickly degrades to an ADP-DnaA complex that is not apt for DNA replication. Binds acidic phospholipids.</text>
</comment>
<comment type="subunit">
    <text evidence="1">Oligomerizes as a right-handed, spiral filament on DNA at oriC.</text>
</comment>
<comment type="subcellular location">
    <subcellularLocation>
        <location evidence="1">Cytoplasm</location>
    </subcellularLocation>
</comment>
<comment type="domain">
    <text evidence="1">Domain I is involved in oligomerization and binding regulators, domain II is flexibile and of varying length in different bacteria, domain III forms the AAA+ region, while domain IV binds dsDNA.</text>
</comment>
<comment type="similarity">
    <text evidence="1">Belongs to the DnaA family.</text>
</comment>